<proteinExistence type="evidence at protein level"/>
<accession>O76821</accession>
<sequence length="64" mass="7059">QINGSYKLEKSDNFDAFLKELGLNFVTRNLAKSATPTVEVSVNGDSYTIKTASTLKNTEISFKL</sequence>
<feature type="chain" id="PRO_0000067419" description="Fatty acid-binding protein">
    <location>
        <begin position="1" status="less than"/>
        <end position="64" status="greater than"/>
    </location>
</feature>
<feature type="non-terminal residue">
    <location>
        <position position="1"/>
    </location>
</feature>
<feature type="non-terminal residue">
    <location>
        <position position="64"/>
    </location>
</feature>
<keyword id="KW-0020">Allergen</keyword>
<keyword id="KW-0963">Cytoplasm</keyword>
<keyword id="KW-0446">Lipid-binding</keyword>
<keyword id="KW-0813">Transport</keyword>
<comment type="function">
    <text evidence="1">FABPs are thought to play a role in the intracellular transport of long-chain fatty acids and their acyl-CoA esters.</text>
</comment>
<comment type="subcellular location">
    <subcellularLocation>
        <location evidence="2">Cytoplasm</location>
    </subcellularLocation>
</comment>
<comment type="domain">
    <text evidence="1">Forms a beta-barrel structure that accommodates hydrophobic ligands in its interior.</text>
</comment>
<comment type="allergen">
    <text>Causes an allergic reaction in human.</text>
</comment>
<comment type="similarity">
    <text evidence="2">Belongs to the calycin superfamily. Fatty-acid binding protein (FABP) family.</text>
</comment>
<protein>
    <recommendedName>
        <fullName>Fatty acid-binding protein</fullName>
    </recommendedName>
    <allergenName>Aca s 13</allergenName>
</protein>
<evidence type="ECO:0000250" key="1"/>
<evidence type="ECO:0000305" key="2"/>
<organism>
    <name type="scientific">Acarus siro</name>
    <name type="common">Flour mite</name>
    <name type="synonym">Tyroglyphus farinae</name>
    <dbReference type="NCBI Taxonomy" id="66546"/>
    <lineage>
        <taxon>Eukaryota</taxon>
        <taxon>Metazoa</taxon>
        <taxon>Ecdysozoa</taxon>
        <taxon>Arthropoda</taxon>
        <taxon>Chelicerata</taxon>
        <taxon>Arachnida</taxon>
        <taxon>Acari</taxon>
        <taxon>Acariformes</taxon>
        <taxon>Sarcoptiformes</taxon>
        <taxon>Astigmata</taxon>
        <taxon>Acaroidea</taxon>
        <taxon>Acaridae</taxon>
        <taxon>Acarinae</taxon>
        <taxon>Acarus</taxon>
    </lineage>
</organism>
<name>FABP_ACASI</name>
<dbReference type="EMBL" id="AJ006774">
    <property type="protein sequence ID" value="CAA07241.1"/>
    <property type="molecule type" value="mRNA"/>
</dbReference>
<dbReference type="SMR" id="O76821"/>
<dbReference type="Allergome" id="2">
    <property type="allergen name" value="Aca s 13"/>
</dbReference>
<dbReference type="Allergome" id="3051">
    <property type="allergen name" value="Aca s 13.0101"/>
</dbReference>
<dbReference type="GO" id="GO:0005737">
    <property type="term" value="C:cytoplasm"/>
    <property type="evidence" value="ECO:0007669"/>
    <property type="project" value="UniProtKB-SubCell"/>
</dbReference>
<dbReference type="GO" id="GO:0008289">
    <property type="term" value="F:lipid binding"/>
    <property type="evidence" value="ECO:0007669"/>
    <property type="project" value="UniProtKB-KW"/>
</dbReference>
<dbReference type="Gene3D" id="2.40.128.20">
    <property type="match status" value="1"/>
</dbReference>
<dbReference type="InterPro" id="IPR012674">
    <property type="entry name" value="Calycin"/>
</dbReference>
<dbReference type="InterPro" id="IPR000463">
    <property type="entry name" value="Fatty_acid-bd"/>
</dbReference>
<dbReference type="InterPro" id="IPR031259">
    <property type="entry name" value="ILBP"/>
</dbReference>
<dbReference type="InterPro" id="IPR000566">
    <property type="entry name" value="Lipocln_cytosolic_FA-bd_dom"/>
</dbReference>
<dbReference type="PANTHER" id="PTHR11955">
    <property type="entry name" value="FATTY ACID BINDING PROTEIN"/>
    <property type="match status" value="1"/>
</dbReference>
<dbReference type="Pfam" id="PF00061">
    <property type="entry name" value="Lipocalin"/>
    <property type="match status" value="1"/>
</dbReference>
<dbReference type="PRINTS" id="PR00178">
    <property type="entry name" value="FATTYACIDBP"/>
</dbReference>
<dbReference type="SUPFAM" id="SSF50814">
    <property type="entry name" value="Lipocalins"/>
    <property type="match status" value="1"/>
</dbReference>
<dbReference type="PROSITE" id="PS00214">
    <property type="entry name" value="FABP"/>
    <property type="match status" value="1"/>
</dbReference>
<reference key="1">
    <citation type="journal article" date="1999" name="Int. Arch. Allergy Immunol.">
        <title>Identification and characterisation of two allergens from the dust mite Acarus siro, homologous with fatty acid-binding proteins.</title>
        <authorList>
            <person name="Eriksson T.L.J."/>
            <person name="Whitley P."/>
            <person name="Johansson E."/>
            <person name="van Hage-Hamsten M."/>
            <person name="Gafvelin G."/>
        </authorList>
    </citation>
    <scope>NUCLEOTIDE SEQUENCE [MRNA]</scope>
</reference>